<protein>
    <recommendedName>
        <fullName evidence="3">NCT transcriptional regulatory complex subunit A</fullName>
    </recommendedName>
    <alternativeName>
        <fullName evidence="3">Negative cofactor 2 AB</fullName>
    </alternativeName>
</protein>
<comment type="function">
    <text evidence="2">Part of the NCT transcriptional regulatory complex that acts as a key regulator of ergosterol biosynthesis and the azole exporter cdr1B (PubMed:31969561). The NCT complex binds the promoters of genes linked to azole susceptibility, and especially represses the expression of cdr1B transporter (PubMed:31969561).</text>
</comment>
<comment type="subunit">
    <text evidence="2">Forms the NCT transcriptional regulatory complex with nctB and mot1.</text>
</comment>
<comment type="subcellular location">
    <subcellularLocation>
        <location evidence="2">Nucleus</location>
    </subcellularLocation>
</comment>
<comment type="disruption phenotype">
    <text evidence="2">Results in a reduction in growth rate (PubMed:31969561). Leads to a multidrug-resistance phenotype, including the azoles (itraconazole, voriconazole and posaconazole), as well as the salvage therapeutic amphotericin B and terbinafine, an agent used in the treatment of chronic and allergic disease (PubMed:31969561). Also leads to transcriptional derepression of cdr1B and its over-production (PubMed:31969561). Also results in a notable increase in the immunogenic properties of Aspergillus fumigatus, but does not result in loss of virulence (PubMed:31969561).</text>
</comment>
<comment type="similarity">
    <text evidence="4">Belongs to the NC2 alpha/DRAP1 family.</text>
</comment>
<sequence>MTDQDSTYRPRSPDLSTFQSSIPPAVNSPIYPLASPLAHRASYDASPFFAPQYQQPPAPLGRVPQQYIPPFVDPNSPLSPDMARRSSRLARATEVAPMPEVSYAQPVLSEEPQQLPPPPPQPNPVASIEVKTKFPVARIKRIMQADEDVGKVAQVTPIAVSKALELFMISLVTKAAKEARDRNSKRVTATHLKQAVVKDEVLDFLADIIAKVPDQPAGGRKHDDDGSDQNEQPKRKRGGRRPKDDSD</sequence>
<proteinExistence type="evidence at protein level"/>
<gene>
    <name evidence="3" type="primary">nctA</name>
    <name type="ORF">AFUB_029870</name>
</gene>
<reference key="1">
    <citation type="journal article" date="2008" name="PLoS Genet.">
        <title>Genomic islands in the pathogenic filamentous fungus Aspergillus fumigatus.</title>
        <authorList>
            <person name="Fedorova N.D."/>
            <person name="Khaldi N."/>
            <person name="Joardar V.S."/>
            <person name="Maiti R."/>
            <person name="Amedeo P."/>
            <person name="Anderson M.J."/>
            <person name="Crabtree J."/>
            <person name="Silva J.C."/>
            <person name="Badger J.H."/>
            <person name="Albarraq A."/>
            <person name="Angiuoli S."/>
            <person name="Bussey H."/>
            <person name="Bowyer P."/>
            <person name="Cotty P.J."/>
            <person name="Dyer P.S."/>
            <person name="Egan A."/>
            <person name="Galens K."/>
            <person name="Fraser-Liggett C.M."/>
            <person name="Haas B.J."/>
            <person name="Inman J.M."/>
            <person name="Kent R."/>
            <person name="Lemieux S."/>
            <person name="Malavazi I."/>
            <person name="Orvis J."/>
            <person name="Roemer T."/>
            <person name="Ronning C.M."/>
            <person name="Sundaram J.P."/>
            <person name="Sutton G."/>
            <person name="Turner G."/>
            <person name="Venter J.C."/>
            <person name="White O.R."/>
            <person name="Whitty B.R."/>
            <person name="Youngman P."/>
            <person name="Wolfe K.H."/>
            <person name="Goldman G.H."/>
            <person name="Wortman J.R."/>
            <person name="Jiang B."/>
            <person name="Denning D.W."/>
            <person name="Nierman W.C."/>
        </authorList>
    </citation>
    <scope>NUCLEOTIDE SEQUENCE [LARGE SCALE GENOMIC DNA]</scope>
    <source>
        <strain>CBS 144.89 / FGSC A1163 / CEA10</strain>
    </source>
</reference>
<reference key="2">
    <citation type="journal article" date="2020" name="Nat. Commun.">
        <title>The negative cofactor 2 complex is a key regulator of drug resistance in Aspergillus fumigatus.</title>
        <authorList>
            <person name="Furukawa T."/>
            <person name="van Rhijn N."/>
            <person name="Fraczek M."/>
            <person name="Gsaller F."/>
            <person name="Davies E."/>
            <person name="Carr P."/>
            <person name="Gago S."/>
            <person name="Fortune-Grant R."/>
            <person name="Rahman S."/>
            <person name="Gilsenan J.M."/>
            <person name="Houlder E."/>
            <person name="Kowalski C.H."/>
            <person name="Raj S."/>
            <person name="Paul S."/>
            <person name="Cook P."/>
            <person name="Parker J.E."/>
            <person name="Kelly S."/>
            <person name="Cramer R.A."/>
            <person name="Latge J.P."/>
            <person name="Moye-Rowley S."/>
            <person name="Bignell E."/>
            <person name="Bowyer P."/>
            <person name="Bromley M.J."/>
        </authorList>
    </citation>
    <scope>FUNCTION</scope>
    <scope>DISRUPTION PHENOTYPE</scope>
    <scope>INTERACTION WITH NCTB AND MOT1</scope>
    <scope>SUBCELLULAR LOCATION</scope>
    <scope>DNA-BINDING</scope>
</reference>
<accession>B0XTT5</accession>
<dbReference type="EMBL" id="DS499595">
    <property type="protein sequence ID" value="EDP54927.1"/>
    <property type="molecule type" value="Genomic_DNA"/>
</dbReference>
<dbReference type="SMR" id="B0XTT5"/>
<dbReference type="EnsemblFungi" id="EDP54927">
    <property type="protein sequence ID" value="EDP54927"/>
    <property type="gene ID" value="AFUB_029870"/>
</dbReference>
<dbReference type="VEuPathDB" id="FungiDB:AFUB_029870"/>
<dbReference type="HOGENOM" id="CLU_045277_6_2_1"/>
<dbReference type="OrthoDB" id="129365at5052"/>
<dbReference type="Proteomes" id="UP000001699">
    <property type="component" value="Unassembled WGS sequence"/>
</dbReference>
<dbReference type="GO" id="GO:0017054">
    <property type="term" value="C:negative cofactor 2 complex"/>
    <property type="evidence" value="ECO:0007669"/>
    <property type="project" value="TreeGrafter"/>
</dbReference>
<dbReference type="GO" id="GO:0001046">
    <property type="term" value="F:core promoter sequence-specific DNA binding"/>
    <property type="evidence" value="ECO:0007669"/>
    <property type="project" value="TreeGrafter"/>
</dbReference>
<dbReference type="GO" id="GO:0046982">
    <property type="term" value="F:protein heterodimerization activity"/>
    <property type="evidence" value="ECO:0007669"/>
    <property type="project" value="InterPro"/>
</dbReference>
<dbReference type="GO" id="GO:0016251">
    <property type="term" value="F:RNA polymerase II general transcription initiation factor activity"/>
    <property type="evidence" value="ECO:0007669"/>
    <property type="project" value="TreeGrafter"/>
</dbReference>
<dbReference type="CDD" id="cd22906">
    <property type="entry name" value="HFD_DRAP1"/>
    <property type="match status" value="1"/>
</dbReference>
<dbReference type="FunFam" id="1.10.20.10:FF:000036">
    <property type="entry name" value="CBF/NF-Y family transcription factor"/>
    <property type="match status" value="1"/>
</dbReference>
<dbReference type="Gene3D" id="1.10.20.10">
    <property type="entry name" value="Histone, subunit A"/>
    <property type="match status" value="1"/>
</dbReference>
<dbReference type="InterPro" id="IPR003958">
    <property type="entry name" value="CBFA_NFYB_domain"/>
</dbReference>
<dbReference type="InterPro" id="IPR009072">
    <property type="entry name" value="Histone-fold"/>
</dbReference>
<dbReference type="InterPro" id="IPR050568">
    <property type="entry name" value="Transcr_DNA_Rep_Reg"/>
</dbReference>
<dbReference type="PANTHER" id="PTHR10252:SF5">
    <property type="entry name" value="DR1-ASSOCIATED COREPRESSOR"/>
    <property type="match status" value="1"/>
</dbReference>
<dbReference type="PANTHER" id="PTHR10252">
    <property type="entry name" value="HISTONE-LIKE TRANSCRIPTION FACTOR CCAAT-RELATED"/>
    <property type="match status" value="1"/>
</dbReference>
<dbReference type="Pfam" id="PF00808">
    <property type="entry name" value="CBFD_NFYB_HMF"/>
    <property type="match status" value="1"/>
</dbReference>
<dbReference type="SUPFAM" id="SSF47113">
    <property type="entry name" value="Histone-fold"/>
    <property type="match status" value="1"/>
</dbReference>
<organism>
    <name type="scientific">Aspergillus fumigatus (strain CBS 144.89 / FGSC A1163 / CEA10)</name>
    <name type="common">Neosartorya fumigata</name>
    <dbReference type="NCBI Taxonomy" id="451804"/>
    <lineage>
        <taxon>Eukaryota</taxon>
        <taxon>Fungi</taxon>
        <taxon>Dikarya</taxon>
        <taxon>Ascomycota</taxon>
        <taxon>Pezizomycotina</taxon>
        <taxon>Eurotiomycetes</taxon>
        <taxon>Eurotiomycetidae</taxon>
        <taxon>Eurotiales</taxon>
        <taxon>Aspergillaceae</taxon>
        <taxon>Aspergillus</taxon>
        <taxon>Aspergillus subgen. Fumigati</taxon>
    </lineage>
</organism>
<keyword id="KW-0238">DNA-binding</keyword>
<keyword id="KW-0539">Nucleus</keyword>
<keyword id="KW-0804">Transcription</keyword>
<keyword id="KW-0805">Transcription regulation</keyword>
<feature type="chain" id="PRO_0000449613" description="NCT transcriptional regulatory complex subunit A">
    <location>
        <begin position="1"/>
        <end position="247"/>
    </location>
</feature>
<feature type="region of interest" description="Disordered" evidence="1">
    <location>
        <begin position="1"/>
        <end position="31"/>
    </location>
</feature>
<feature type="region of interest" description="Disordered" evidence="1">
    <location>
        <begin position="48"/>
        <end position="82"/>
    </location>
</feature>
<feature type="region of interest" description="Disordered" evidence="1">
    <location>
        <begin position="212"/>
        <end position="247"/>
    </location>
</feature>
<feature type="compositionally biased region" description="Basic and acidic residues" evidence="1">
    <location>
        <begin position="1"/>
        <end position="12"/>
    </location>
</feature>
<feature type="compositionally biased region" description="Polar residues" evidence="1">
    <location>
        <begin position="13"/>
        <end position="22"/>
    </location>
</feature>
<evidence type="ECO:0000256" key="1">
    <source>
        <dbReference type="SAM" id="MobiDB-lite"/>
    </source>
</evidence>
<evidence type="ECO:0000269" key="2">
    <source>
    </source>
</evidence>
<evidence type="ECO:0000303" key="3">
    <source>
    </source>
</evidence>
<evidence type="ECO:0000305" key="4"/>
<name>NCTA_ASPFC</name>